<protein>
    <recommendedName>
        <fullName evidence="1">Ribosome hibernation promotion factor</fullName>
        <shortName evidence="1">HPF</shortName>
    </recommendedName>
</protein>
<name>HPF_STAAR</name>
<reference key="1">
    <citation type="journal article" date="2004" name="Proc. Natl. Acad. Sci. U.S.A.">
        <title>Complete genomes of two clinical Staphylococcus aureus strains: evidence for the rapid evolution of virulence and drug resistance.</title>
        <authorList>
            <person name="Holden M.T.G."/>
            <person name="Feil E.J."/>
            <person name="Lindsay J.A."/>
            <person name="Peacock S.J."/>
            <person name="Day N.P.J."/>
            <person name="Enright M.C."/>
            <person name="Foster T.J."/>
            <person name="Moore C.E."/>
            <person name="Hurst L."/>
            <person name="Atkin R."/>
            <person name="Barron A."/>
            <person name="Bason N."/>
            <person name="Bentley S.D."/>
            <person name="Chillingworth C."/>
            <person name="Chillingworth T."/>
            <person name="Churcher C."/>
            <person name="Clark L."/>
            <person name="Corton C."/>
            <person name="Cronin A."/>
            <person name="Doggett J."/>
            <person name="Dowd L."/>
            <person name="Feltwell T."/>
            <person name="Hance Z."/>
            <person name="Harris B."/>
            <person name="Hauser H."/>
            <person name="Holroyd S."/>
            <person name="Jagels K."/>
            <person name="James K.D."/>
            <person name="Lennard N."/>
            <person name="Line A."/>
            <person name="Mayes R."/>
            <person name="Moule S."/>
            <person name="Mungall K."/>
            <person name="Ormond D."/>
            <person name="Quail M.A."/>
            <person name="Rabbinowitsch E."/>
            <person name="Rutherford K.M."/>
            <person name="Sanders M."/>
            <person name="Sharp S."/>
            <person name="Simmonds M."/>
            <person name="Stevens K."/>
            <person name="Whitehead S."/>
            <person name="Barrell B.G."/>
            <person name="Spratt B.G."/>
            <person name="Parkhill J."/>
        </authorList>
    </citation>
    <scope>NUCLEOTIDE SEQUENCE [LARGE SCALE GENOMIC DNA]</scope>
    <source>
        <strain>MRSA252</strain>
    </source>
</reference>
<keyword id="KW-0963">Cytoplasm</keyword>
<keyword id="KW-0810">Translation regulation</keyword>
<accession>Q6GIN9</accession>
<sequence>MIRFEIHGDNLTITDAIRNYIEEKIGKLERYFNDVPNAVAHVKVKTYSNSATKIEVTIPLKNVTLRAEERNDDLYAGIDLINNKLERQVRKYKTRINRKSRDRGDQEVFVAELQEMQETQVDNDAYDDNEIEIIRSKEFSLKPMDSEEAVLQMNLLGHDFFVFTDRETDGTSIVYRRKDGKYGLIQTSEQ</sequence>
<comment type="function">
    <text evidence="1">Required for dimerization of active 70S ribosomes into 100S ribosomes in stationary phase; 100S ribosomes are translationally inactive and sometimes present during exponential growth.</text>
</comment>
<comment type="subunit">
    <text evidence="1">Interacts with 100S ribosomes.</text>
</comment>
<comment type="subcellular location">
    <subcellularLocation>
        <location evidence="1">Cytoplasm</location>
    </subcellularLocation>
</comment>
<comment type="similarity">
    <text evidence="1">Belongs to the HPF/YfiA ribosome-associated protein family. Long HPF subfamily.</text>
</comment>
<dbReference type="EMBL" id="BX571856">
    <property type="protein sequence ID" value="CAG39816.1"/>
    <property type="molecule type" value="Genomic_DNA"/>
</dbReference>
<dbReference type="RefSeq" id="WP_000617735.1">
    <property type="nucleotide sequence ID" value="NC_002952.2"/>
</dbReference>
<dbReference type="SMR" id="Q6GIN9"/>
<dbReference type="KEGG" id="sar:SAR0806"/>
<dbReference type="HOGENOM" id="CLU_071472_0_3_9"/>
<dbReference type="Proteomes" id="UP000000596">
    <property type="component" value="Chromosome"/>
</dbReference>
<dbReference type="GO" id="GO:0022627">
    <property type="term" value="C:cytosolic small ribosomal subunit"/>
    <property type="evidence" value="ECO:0007669"/>
    <property type="project" value="TreeGrafter"/>
</dbReference>
<dbReference type="GO" id="GO:0043024">
    <property type="term" value="F:ribosomal small subunit binding"/>
    <property type="evidence" value="ECO:0007669"/>
    <property type="project" value="TreeGrafter"/>
</dbReference>
<dbReference type="GO" id="GO:0045900">
    <property type="term" value="P:negative regulation of translational elongation"/>
    <property type="evidence" value="ECO:0007669"/>
    <property type="project" value="TreeGrafter"/>
</dbReference>
<dbReference type="CDD" id="cd00552">
    <property type="entry name" value="RaiA"/>
    <property type="match status" value="1"/>
</dbReference>
<dbReference type="FunFam" id="3.30.160.100:FF:000003">
    <property type="entry name" value="Ribosome hibernation promoting factor"/>
    <property type="match status" value="1"/>
</dbReference>
<dbReference type="FunFam" id="3.30.505.50:FF:000001">
    <property type="entry name" value="Ribosome hibernation promoting factor"/>
    <property type="match status" value="1"/>
</dbReference>
<dbReference type="Gene3D" id="3.30.160.100">
    <property type="entry name" value="Ribosome hibernation promotion factor-like"/>
    <property type="match status" value="1"/>
</dbReference>
<dbReference type="Gene3D" id="3.30.505.50">
    <property type="entry name" value="Sigma 54 modulation/S30EA ribosomal protein, C-terminal domain"/>
    <property type="match status" value="1"/>
</dbReference>
<dbReference type="HAMAP" id="MF_00839">
    <property type="entry name" value="HPF"/>
    <property type="match status" value="1"/>
</dbReference>
<dbReference type="InterPro" id="IPR050574">
    <property type="entry name" value="HPF/YfiA_ribosome-assoc"/>
</dbReference>
<dbReference type="InterPro" id="IPR034694">
    <property type="entry name" value="HPF_long/plastid"/>
</dbReference>
<dbReference type="InterPro" id="IPR036567">
    <property type="entry name" value="RHF-like"/>
</dbReference>
<dbReference type="InterPro" id="IPR003489">
    <property type="entry name" value="RHF/RaiA"/>
</dbReference>
<dbReference type="InterPro" id="IPR032528">
    <property type="entry name" value="Ribosom_S30AE_C"/>
</dbReference>
<dbReference type="InterPro" id="IPR038416">
    <property type="entry name" value="Ribosom_S30AE_C_sf"/>
</dbReference>
<dbReference type="NCBIfam" id="TIGR00741">
    <property type="entry name" value="yfiA"/>
    <property type="match status" value="1"/>
</dbReference>
<dbReference type="PANTHER" id="PTHR33231">
    <property type="entry name" value="30S RIBOSOMAL PROTEIN"/>
    <property type="match status" value="1"/>
</dbReference>
<dbReference type="PANTHER" id="PTHR33231:SF1">
    <property type="entry name" value="30S RIBOSOMAL PROTEIN"/>
    <property type="match status" value="1"/>
</dbReference>
<dbReference type="Pfam" id="PF16321">
    <property type="entry name" value="Ribosom_S30AE_C"/>
    <property type="match status" value="1"/>
</dbReference>
<dbReference type="Pfam" id="PF02482">
    <property type="entry name" value="Ribosomal_S30AE"/>
    <property type="match status" value="1"/>
</dbReference>
<dbReference type="SUPFAM" id="SSF69754">
    <property type="entry name" value="Ribosome binding protein Y (YfiA homologue)"/>
    <property type="match status" value="1"/>
</dbReference>
<organism>
    <name type="scientific">Staphylococcus aureus (strain MRSA252)</name>
    <dbReference type="NCBI Taxonomy" id="282458"/>
    <lineage>
        <taxon>Bacteria</taxon>
        <taxon>Bacillati</taxon>
        <taxon>Bacillota</taxon>
        <taxon>Bacilli</taxon>
        <taxon>Bacillales</taxon>
        <taxon>Staphylococcaceae</taxon>
        <taxon>Staphylococcus</taxon>
    </lineage>
</organism>
<evidence type="ECO:0000255" key="1">
    <source>
        <dbReference type="HAMAP-Rule" id="MF_00839"/>
    </source>
</evidence>
<proteinExistence type="inferred from homology"/>
<feature type="chain" id="PRO_0000291314" description="Ribosome hibernation promotion factor">
    <location>
        <begin position="1"/>
        <end position="190"/>
    </location>
</feature>
<gene>
    <name evidence="1" type="primary">hpf</name>
    <name type="ordered locus">SAR0806</name>
</gene>